<sequence>MTKTKIIGILNVTPDSFSDGGKYNSVDKAIARAKEMIDEGVDIIDVGGVSTRPGHTEVSLEEEMERVVPVVEQLVKLDVQISVDTYRSEVAEACLKLGATMINDQWAGLYDPKIFDVVSDYNAEIVLMHNGDGQREQPVVEEMLLSLLTQANKAEMAGIEKGNIWLDPGIGFAKSRSEEKEVMARLDELVATEYPVLLATSRKRFIKEMIGKETTPAERDEATAATTVYGIMKGIQAVRVHNVDLNVKLAQSIDFLKENEHERHHLS</sequence>
<protein>
    <recommendedName>
        <fullName>Dihydropteroate synthase</fullName>
        <shortName>DHPS</shortName>
        <ecNumber>2.5.1.15</ecNumber>
    </recommendedName>
    <alternativeName>
        <fullName>Dihydropteroate pyrophosphorylase</fullName>
    </alternativeName>
</protein>
<comment type="function">
    <text evidence="1">Catalyzes the condensation of para-aminobenzoate (pABA) with 6-hydroxymethyl-7,8-dihydropterin diphosphate (DHPt-PP) to form 7,8-dihydropteroate (H2Pte), the immediate precursor of folate derivatives.</text>
</comment>
<comment type="catalytic activity">
    <reaction evidence="1">
        <text>(7,8-dihydropterin-6-yl)methyl diphosphate + 4-aminobenzoate = 7,8-dihydropteroate + diphosphate</text>
        <dbReference type="Rhea" id="RHEA:19949"/>
        <dbReference type="ChEBI" id="CHEBI:17836"/>
        <dbReference type="ChEBI" id="CHEBI:17839"/>
        <dbReference type="ChEBI" id="CHEBI:33019"/>
        <dbReference type="ChEBI" id="CHEBI:72950"/>
        <dbReference type="EC" id="2.5.1.15"/>
    </reaction>
</comment>
<comment type="cofactor">
    <cofactor evidence="1">
        <name>Mg(2+)</name>
        <dbReference type="ChEBI" id="CHEBI:18420"/>
    </cofactor>
</comment>
<comment type="pathway">
    <text>Cofactor biosynthesis; tetrahydrofolate biosynthesis; 7,8-dihydrofolate from 2-amino-4-hydroxy-6-hydroxymethyl-7,8-dihydropteridine diphosphate and 4-aminobenzoate: step 1/2.</text>
</comment>
<comment type="similarity">
    <text evidence="4">Belongs to the DHPS family.</text>
</comment>
<organism>
    <name type="scientific">Staphylococcus haemolyticus</name>
    <dbReference type="NCBI Taxonomy" id="1283"/>
    <lineage>
        <taxon>Bacteria</taxon>
        <taxon>Bacillati</taxon>
        <taxon>Bacillota</taxon>
        <taxon>Bacilli</taxon>
        <taxon>Bacillales</taxon>
        <taxon>Staphylococcaceae</taxon>
        <taxon>Staphylococcus</taxon>
    </lineage>
</organism>
<proteinExistence type="inferred from homology"/>
<evidence type="ECO:0000250" key="1">
    <source>
        <dbReference type="UniProtKB" id="P0AC13"/>
    </source>
</evidence>
<evidence type="ECO:0000250" key="2">
    <source>
        <dbReference type="UniProtKB" id="P9WND1"/>
    </source>
</evidence>
<evidence type="ECO:0000255" key="3">
    <source>
        <dbReference type="PROSITE-ProRule" id="PRU00334"/>
    </source>
</evidence>
<evidence type="ECO:0000305" key="4"/>
<keyword id="KW-0289">Folate biosynthesis</keyword>
<keyword id="KW-0460">Magnesium</keyword>
<keyword id="KW-0479">Metal-binding</keyword>
<keyword id="KW-0808">Transferase</keyword>
<name>DHPS_STAHA</name>
<feature type="chain" id="PRO_0000168229" description="Dihydropteroate synthase">
    <location>
        <begin position="1"/>
        <end position="267"/>
    </location>
</feature>
<feature type="domain" description="Pterin-binding" evidence="3">
    <location>
        <begin position="1"/>
        <end position="251"/>
    </location>
</feature>
<feature type="binding site" evidence="2">
    <location>
        <position position="11"/>
    </location>
    <ligand>
        <name>Mg(2+)</name>
        <dbReference type="ChEBI" id="CHEBI:18420"/>
    </ligand>
</feature>
<feature type="binding site" evidence="1">
    <location>
        <position position="51"/>
    </location>
    <ligand>
        <name>(7,8-dihydropterin-6-yl)methyl diphosphate</name>
        <dbReference type="ChEBI" id="CHEBI:72950"/>
    </ligand>
</feature>
<feature type="binding site" evidence="1">
    <location>
        <position position="84"/>
    </location>
    <ligand>
        <name>(7,8-dihydropterin-6-yl)methyl diphosphate</name>
        <dbReference type="ChEBI" id="CHEBI:72950"/>
    </ligand>
</feature>
<feature type="binding site" evidence="1">
    <location>
        <position position="103"/>
    </location>
    <ligand>
        <name>(7,8-dihydropterin-6-yl)methyl diphosphate</name>
        <dbReference type="ChEBI" id="CHEBI:72950"/>
    </ligand>
</feature>
<feature type="binding site" evidence="1">
    <location>
        <position position="167"/>
    </location>
    <ligand>
        <name>(7,8-dihydropterin-6-yl)methyl diphosphate</name>
        <dbReference type="ChEBI" id="CHEBI:72950"/>
    </ligand>
</feature>
<feature type="binding site" evidence="1">
    <location>
        <position position="203"/>
    </location>
    <ligand>
        <name>(7,8-dihydropterin-6-yl)methyl diphosphate</name>
        <dbReference type="ChEBI" id="CHEBI:72950"/>
    </ligand>
</feature>
<feature type="binding site" evidence="1">
    <location>
        <begin position="239"/>
        <end position="241"/>
    </location>
    <ligand>
        <name>(7,8-dihydropterin-6-yl)methyl diphosphate</name>
        <dbReference type="ChEBI" id="CHEBI:72950"/>
    </ligand>
</feature>
<reference key="1">
    <citation type="journal article" date="1995" name="FEMS Microbiol. Lett.">
        <title>Functional cloning of the dihydropteroate synthase gene of Staphylococcus haemolyticus.</title>
        <authorList>
            <person name="Kellam P."/>
            <person name="Dallas W.S."/>
            <person name="Ballantine S.P."/>
            <person name="Delves C.J."/>
        </authorList>
    </citation>
    <scope>NUCLEOTIDE SEQUENCE [GENOMIC DNA]</scope>
</reference>
<gene>
    <name type="primary">folP</name>
</gene>
<dbReference type="EC" id="2.5.1.15"/>
<dbReference type="EMBL" id="U40768">
    <property type="protein sequence ID" value="AAC43583.1"/>
    <property type="molecule type" value="Genomic_DNA"/>
</dbReference>
<dbReference type="SMR" id="Q59919"/>
<dbReference type="STRING" id="1283.ShL2_02282"/>
<dbReference type="UniPathway" id="UPA00077">
    <property type="reaction ID" value="UER00156"/>
</dbReference>
<dbReference type="GO" id="GO:0005829">
    <property type="term" value="C:cytosol"/>
    <property type="evidence" value="ECO:0007669"/>
    <property type="project" value="TreeGrafter"/>
</dbReference>
<dbReference type="GO" id="GO:0004156">
    <property type="term" value="F:dihydropteroate synthase activity"/>
    <property type="evidence" value="ECO:0007669"/>
    <property type="project" value="UniProtKB-EC"/>
</dbReference>
<dbReference type="GO" id="GO:0046872">
    <property type="term" value="F:metal ion binding"/>
    <property type="evidence" value="ECO:0007669"/>
    <property type="project" value="UniProtKB-KW"/>
</dbReference>
<dbReference type="GO" id="GO:0046656">
    <property type="term" value="P:folic acid biosynthetic process"/>
    <property type="evidence" value="ECO:0007669"/>
    <property type="project" value="UniProtKB-KW"/>
</dbReference>
<dbReference type="GO" id="GO:0046654">
    <property type="term" value="P:tetrahydrofolate biosynthetic process"/>
    <property type="evidence" value="ECO:0007669"/>
    <property type="project" value="UniProtKB-UniPathway"/>
</dbReference>
<dbReference type="CDD" id="cd00739">
    <property type="entry name" value="DHPS"/>
    <property type="match status" value="1"/>
</dbReference>
<dbReference type="FunFam" id="3.20.20.20:FF:000010">
    <property type="entry name" value="Dihydropteroate synthase"/>
    <property type="match status" value="1"/>
</dbReference>
<dbReference type="Gene3D" id="3.20.20.20">
    <property type="entry name" value="Dihydropteroate synthase-like"/>
    <property type="match status" value="1"/>
</dbReference>
<dbReference type="InterPro" id="IPR045031">
    <property type="entry name" value="DHP_synth-like"/>
</dbReference>
<dbReference type="InterPro" id="IPR006390">
    <property type="entry name" value="DHP_synth_dom"/>
</dbReference>
<dbReference type="InterPro" id="IPR011005">
    <property type="entry name" value="Dihydropteroate_synth-like_sf"/>
</dbReference>
<dbReference type="InterPro" id="IPR000489">
    <property type="entry name" value="Pterin-binding_dom"/>
</dbReference>
<dbReference type="NCBIfam" id="TIGR01496">
    <property type="entry name" value="DHPS"/>
    <property type="match status" value="1"/>
</dbReference>
<dbReference type="PANTHER" id="PTHR20941">
    <property type="entry name" value="FOLATE SYNTHESIS PROTEINS"/>
    <property type="match status" value="1"/>
</dbReference>
<dbReference type="PANTHER" id="PTHR20941:SF1">
    <property type="entry name" value="FOLIC ACID SYNTHESIS PROTEIN FOL1"/>
    <property type="match status" value="1"/>
</dbReference>
<dbReference type="Pfam" id="PF00809">
    <property type="entry name" value="Pterin_bind"/>
    <property type="match status" value="1"/>
</dbReference>
<dbReference type="SUPFAM" id="SSF51717">
    <property type="entry name" value="Dihydropteroate synthetase-like"/>
    <property type="match status" value="1"/>
</dbReference>
<dbReference type="PROSITE" id="PS00792">
    <property type="entry name" value="DHPS_1"/>
    <property type="match status" value="1"/>
</dbReference>
<dbReference type="PROSITE" id="PS00793">
    <property type="entry name" value="DHPS_2"/>
    <property type="match status" value="1"/>
</dbReference>
<dbReference type="PROSITE" id="PS50972">
    <property type="entry name" value="PTERIN_BINDING"/>
    <property type="match status" value="1"/>
</dbReference>
<accession>Q59919</accession>